<proteinExistence type="evidence at protein level"/>
<accession>A0A5P9K9Z4</accession>
<sequence>MAFLKKSLFLVLFLGLVSLSMCEEEKRENEVEEEQEDDEQSELRRSLWSSIKDMAAAAGRAALNAVNGIVNPGEQ</sequence>
<protein>
    <recommendedName>
        <fullName evidence="5">Dermaseptin-SP3</fullName>
        <shortName evidence="5">DRS-SP3</shortName>
    </recommendedName>
</protein>
<reference key="1">
    <citation type="journal article" date="2019" name="Biomolecules">
        <title>Unravelling the skin secretion peptides of the gliding leaf frog, Agalychnis spurrelli (Hylidae).</title>
        <authorList>
            <person name="Proano-Bolanos C."/>
            <person name="Blasco-Zuniga A."/>
            <person name="Almeida J.R."/>
            <person name="Wang L."/>
            <person name="Llumiquinga M.A."/>
            <person name="Rivera M."/>
            <person name="Zhou M."/>
            <person name="Chen T."/>
            <person name="Shaw C."/>
        </authorList>
    </citation>
    <scope>NUCLEOTIDE SEQUENCE [MRNA]</scope>
    <scope>FUNCTION</scope>
    <scope>IDENTIFICATION BY MASS SPECTROMETRY</scope>
    <scope>SYNTHESIS OF 46-72</scope>
    <scope>SUBCELLULAR LOCATION</scope>
    <scope>AMIDATION AT PRO-72</scope>
    <source>
        <tissue>Skin secretion</tissue>
    </source>
</reference>
<reference key="2">
    <citation type="journal article" date="2019" name="J. Mol. Model.">
        <title>Molecular modeling of four dermaseptin-related peptides of the gliding tree frog Agalychnis spurrelli.</title>
        <authorList>
            <person name="Cuesta S."/>
            <person name="Gallegos F."/>
            <person name="Arias J."/>
            <person name="Pilaquinga F."/>
            <person name="Blasco-Zuniga A."/>
            <person name="Proano-Bolanos C."/>
            <person name="Rivera M."/>
            <person name="Meneses L."/>
        </authorList>
    </citation>
    <scope>NUCLEOTIDE SEQUENCE [MRNA]</scope>
    <scope>FUNCTION</scope>
    <scope>SYNTHESIS OF 46-73</scope>
    <scope>IDENTIFICATION BY MASS SPECTROMETRY</scope>
    <scope>SUBCELLULAR LOCATION</scope>
    <scope>3D-STRUCTURE MODELING</scope>
    <source>
        <tissue>Skin secretion</tissue>
    </source>
</reference>
<name>DRS3_AGASP</name>
<comment type="function">
    <text evidence="3 4 7">Antimicrobial peptide with activity against Gram-positive and Gram-negative bacteria and fungi (PubMed:31422479, PubMed:31671555). Has been tested against E.coli (MIC=47.50-128 uM), S.aureus (MIC=189.98-512 uM), K.pneumoniae (MIC&gt;189.98 uM) and C.albicans (MIC&gt;189.98 uM) (PubMed:31422479, PubMed:31671555). Probably acts by disturbing membrane functions with its alpha-helical amphipathic structure (Probable). May penetrate bacterial membranes, but stay at the mammalian membrane surface (Probable). Shows a very weak hemolytic activity (PubMed:31671555).</text>
</comment>
<comment type="subcellular location">
    <subcellularLocation>
        <location evidence="3 4">Secreted</location>
    </subcellularLocation>
    <subcellularLocation>
        <location evidence="1">Target cell membrane</location>
    </subcellularLocation>
</comment>
<comment type="tissue specificity">
    <text evidence="8">Expressed by the skin glands.</text>
</comment>
<comment type="similarity">
    <text evidence="6">Belongs to the frog skin active peptide (FSAP) family. Dermaseptin subfamily.</text>
</comment>
<organism>
    <name type="scientific">Agalychnis spurrelli</name>
    <name type="common">Gliding leaf frog</name>
    <name type="synonym">Agalychnis litodryas</name>
    <dbReference type="NCBI Taxonomy" id="317303"/>
    <lineage>
        <taxon>Eukaryota</taxon>
        <taxon>Metazoa</taxon>
        <taxon>Chordata</taxon>
        <taxon>Craniata</taxon>
        <taxon>Vertebrata</taxon>
        <taxon>Euteleostomi</taxon>
        <taxon>Amphibia</taxon>
        <taxon>Batrachia</taxon>
        <taxon>Anura</taxon>
        <taxon>Neobatrachia</taxon>
        <taxon>Hyloidea</taxon>
        <taxon>Hylidae</taxon>
        <taxon>Phyllomedusinae</taxon>
        <taxon>Agalychnis</taxon>
    </lineage>
</organism>
<evidence type="ECO:0000250" key="1">
    <source>
        <dbReference type="UniProtKB" id="P31107"/>
    </source>
</evidence>
<evidence type="ECO:0000255" key="2"/>
<evidence type="ECO:0000269" key="3">
    <source>
    </source>
</evidence>
<evidence type="ECO:0000269" key="4">
    <source>
    </source>
</evidence>
<evidence type="ECO:0000303" key="5">
    <source>
    </source>
</evidence>
<evidence type="ECO:0000305" key="6"/>
<evidence type="ECO:0000305" key="7">
    <source>
    </source>
</evidence>
<evidence type="ECO:0000305" key="8">
    <source>
    </source>
</evidence>
<keyword id="KW-0027">Amidation</keyword>
<keyword id="KW-0878">Amphibian defense peptide</keyword>
<keyword id="KW-0044">Antibiotic</keyword>
<keyword id="KW-0929">Antimicrobial</keyword>
<keyword id="KW-0165">Cleavage on pair of basic residues</keyword>
<keyword id="KW-0204">Cytolysis</keyword>
<keyword id="KW-0295">Fungicide</keyword>
<keyword id="KW-0354">Hemolysis</keyword>
<keyword id="KW-0391">Immunity</keyword>
<keyword id="KW-0399">Innate immunity</keyword>
<keyword id="KW-0472">Membrane</keyword>
<keyword id="KW-0964">Secreted</keyword>
<keyword id="KW-0732">Signal</keyword>
<keyword id="KW-1052">Target cell membrane</keyword>
<keyword id="KW-1053">Target membrane</keyword>
<feature type="signal peptide" evidence="2">
    <location>
        <begin position="1"/>
        <end position="22"/>
    </location>
</feature>
<feature type="propeptide" id="PRO_0000449986" evidence="8">
    <location>
        <begin position="23"/>
        <end position="45"/>
    </location>
</feature>
<feature type="peptide" id="PRO_0000449987" description="Dermaseptin-SP3" evidence="8">
    <location>
        <begin position="46"/>
        <end position="72"/>
    </location>
</feature>
<feature type="propeptide" id="PRO_0000449988" evidence="8">
    <location>
        <begin position="74"/>
        <end position="75"/>
    </location>
</feature>
<feature type="modified residue" description="Proline amide" evidence="8">
    <location>
        <position position="72"/>
    </location>
</feature>
<dbReference type="EMBL" id="MK532481">
    <property type="protein sequence ID" value="QFU19631.1"/>
    <property type="molecule type" value="mRNA"/>
</dbReference>
<dbReference type="GO" id="GO:0005576">
    <property type="term" value="C:extracellular region"/>
    <property type="evidence" value="ECO:0007669"/>
    <property type="project" value="UniProtKB-SubCell"/>
</dbReference>
<dbReference type="GO" id="GO:0016020">
    <property type="term" value="C:membrane"/>
    <property type="evidence" value="ECO:0007669"/>
    <property type="project" value="UniProtKB-KW"/>
</dbReference>
<dbReference type="GO" id="GO:0044218">
    <property type="term" value="C:other organism cell membrane"/>
    <property type="evidence" value="ECO:0007669"/>
    <property type="project" value="UniProtKB-KW"/>
</dbReference>
<dbReference type="GO" id="GO:0042742">
    <property type="term" value="P:defense response to bacterium"/>
    <property type="evidence" value="ECO:0007669"/>
    <property type="project" value="UniProtKB-KW"/>
</dbReference>
<dbReference type="GO" id="GO:0050832">
    <property type="term" value="P:defense response to fungus"/>
    <property type="evidence" value="ECO:0007669"/>
    <property type="project" value="UniProtKB-KW"/>
</dbReference>
<dbReference type="GO" id="GO:0045087">
    <property type="term" value="P:innate immune response"/>
    <property type="evidence" value="ECO:0007669"/>
    <property type="project" value="UniProtKB-KW"/>
</dbReference>
<dbReference type="GO" id="GO:0031640">
    <property type="term" value="P:killing of cells of another organism"/>
    <property type="evidence" value="ECO:0007669"/>
    <property type="project" value="UniProtKB-KW"/>
</dbReference>
<dbReference type="InterPro" id="IPR022731">
    <property type="entry name" value="Dermaseptin_dom"/>
</dbReference>
<dbReference type="InterPro" id="IPR004275">
    <property type="entry name" value="Frog_antimicrobial_propeptide"/>
</dbReference>
<dbReference type="InterPro" id="IPR016322">
    <property type="entry name" value="FSAP"/>
</dbReference>
<dbReference type="Pfam" id="PF12121">
    <property type="entry name" value="DD_K"/>
    <property type="match status" value="1"/>
</dbReference>
<dbReference type="Pfam" id="PF03032">
    <property type="entry name" value="FSAP_sig_propep"/>
    <property type="match status" value="1"/>
</dbReference>
<dbReference type="PIRSF" id="PIRSF001822">
    <property type="entry name" value="Dermaseptin_precursor"/>
    <property type="match status" value="1"/>
</dbReference>